<keyword id="KW-1185">Reference proteome</keyword>
<keyword id="KW-0687">Ribonucleoprotein</keyword>
<keyword id="KW-0689">Ribosomal protein</keyword>
<keyword id="KW-0694">RNA-binding</keyword>
<keyword id="KW-0699">rRNA-binding</keyword>
<proteinExistence type="inferred from homology"/>
<name>RS4C_CLOAB</name>
<protein>
    <recommendedName>
        <fullName evidence="2">Small ribosomal subunit protein uS4C</fullName>
    </recommendedName>
    <alternativeName>
        <fullName evidence="3">30S ribosomal protein S4 3</fullName>
    </alternativeName>
</protein>
<accession>Q97IP6</accession>
<reference key="1">
    <citation type="journal article" date="2001" name="J. Bacteriol.">
        <title>Genome sequence and comparative analysis of the solvent-producing bacterium Clostridium acetobutylicum.</title>
        <authorList>
            <person name="Noelling J."/>
            <person name="Breton G."/>
            <person name="Omelchenko M.V."/>
            <person name="Makarova K.S."/>
            <person name="Zeng Q."/>
            <person name="Gibson R."/>
            <person name="Lee H.M."/>
            <person name="Dubois J."/>
            <person name="Qiu D."/>
            <person name="Hitti J."/>
            <person name="Wolf Y.I."/>
            <person name="Tatusov R.L."/>
            <person name="Sabathe F."/>
            <person name="Doucette-Stamm L.A."/>
            <person name="Soucaille P."/>
            <person name="Daly M.J."/>
            <person name="Bennett G.N."/>
            <person name="Koonin E.V."/>
            <person name="Smith D.R."/>
        </authorList>
    </citation>
    <scope>NUCLEOTIDE SEQUENCE [LARGE SCALE GENOMIC DNA]</scope>
    <source>
        <strain>ATCC 824 / DSM 792 / JCM 1419 / IAM 19013 / LMG 5710 / NBRC 13948 / NRRL B-527 / VKM B-1787 / 2291 / W</strain>
    </source>
</reference>
<organism>
    <name type="scientific">Clostridium acetobutylicum (strain ATCC 824 / DSM 792 / JCM 1419 / IAM 19013 / LMG 5710 / NBRC 13948 / NRRL B-527 / VKM B-1787 / 2291 / W)</name>
    <dbReference type="NCBI Taxonomy" id="272562"/>
    <lineage>
        <taxon>Bacteria</taxon>
        <taxon>Bacillati</taxon>
        <taxon>Bacillota</taxon>
        <taxon>Clostridia</taxon>
        <taxon>Eubacteriales</taxon>
        <taxon>Clostridiaceae</taxon>
        <taxon>Clostridium</taxon>
    </lineage>
</organism>
<sequence>MATMREPRFKLSRRLGVNIYGHPKAMKRFETTNTRKKKISDYGMHLIEKQKLKAYYGVLEKQFSRYVKAAMKNKEASGSSLLKILECRLDNVVYRIGFANSIRQARQMVSHGLILVNGKKLDIPSYEVQVGDVVSLKEKHRQNEMFSNNFMNLSTFNVPYIEKNPDEFSGKLLRLPNIDEIPIKVNEVAVIEFYSK</sequence>
<dbReference type="EMBL" id="AE001437">
    <property type="protein sequence ID" value="AAK79561.1"/>
    <property type="molecule type" value="Genomic_DNA"/>
</dbReference>
<dbReference type="PIR" id="F97096">
    <property type="entry name" value="F97096"/>
</dbReference>
<dbReference type="RefSeq" id="NP_348221.1">
    <property type="nucleotide sequence ID" value="NC_003030.1"/>
</dbReference>
<dbReference type="SMR" id="Q97IP6"/>
<dbReference type="STRING" id="272562.CA_C1594"/>
<dbReference type="KEGG" id="cac:CA_C1594"/>
<dbReference type="PATRIC" id="fig|272562.8.peg.1794"/>
<dbReference type="eggNOG" id="COG0522">
    <property type="taxonomic scope" value="Bacteria"/>
</dbReference>
<dbReference type="HOGENOM" id="CLU_092403_0_1_9"/>
<dbReference type="OrthoDB" id="9803672at2"/>
<dbReference type="Proteomes" id="UP000000814">
    <property type="component" value="Chromosome"/>
</dbReference>
<dbReference type="GO" id="GO:0015935">
    <property type="term" value="C:small ribosomal subunit"/>
    <property type="evidence" value="ECO:0007669"/>
    <property type="project" value="InterPro"/>
</dbReference>
<dbReference type="GO" id="GO:0019843">
    <property type="term" value="F:rRNA binding"/>
    <property type="evidence" value="ECO:0007669"/>
    <property type="project" value="UniProtKB-UniRule"/>
</dbReference>
<dbReference type="GO" id="GO:0003735">
    <property type="term" value="F:structural constituent of ribosome"/>
    <property type="evidence" value="ECO:0007669"/>
    <property type="project" value="InterPro"/>
</dbReference>
<dbReference type="GO" id="GO:0042274">
    <property type="term" value="P:ribosomal small subunit biogenesis"/>
    <property type="evidence" value="ECO:0007669"/>
    <property type="project" value="TreeGrafter"/>
</dbReference>
<dbReference type="GO" id="GO:0006412">
    <property type="term" value="P:translation"/>
    <property type="evidence" value="ECO:0007669"/>
    <property type="project" value="UniProtKB-UniRule"/>
</dbReference>
<dbReference type="CDD" id="cd00165">
    <property type="entry name" value="S4"/>
    <property type="match status" value="1"/>
</dbReference>
<dbReference type="FunFam" id="3.10.290.10:FF:000001">
    <property type="entry name" value="30S ribosomal protein S4"/>
    <property type="match status" value="1"/>
</dbReference>
<dbReference type="Gene3D" id="1.10.1050.10">
    <property type="entry name" value="Ribosomal Protein S4 Delta 41, Chain A, domain 1"/>
    <property type="match status" value="1"/>
</dbReference>
<dbReference type="Gene3D" id="3.10.290.10">
    <property type="entry name" value="RNA-binding S4 domain"/>
    <property type="match status" value="1"/>
</dbReference>
<dbReference type="HAMAP" id="MF_01306_B">
    <property type="entry name" value="Ribosomal_uS4_B"/>
    <property type="match status" value="1"/>
</dbReference>
<dbReference type="InterPro" id="IPR022801">
    <property type="entry name" value="Ribosomal_uS4"/>
</dbReference>
<dbReference type="InterPro" id="IPR005709">
    <property type="entry name" value="Ribosomal_uS4_bac-type"/>
</dbReference>
<dbReference type="InterPro" id="IPR018079">
    <property type="entry name" value="Ribosomal_uS4_CS"/>
</dbReference>
<dbReference type="InterPro" id="IPR001912">
    <property type="entry name" value="Ribosomal_uS4_N"/>
</dbReference>
<dbReference type="InterPro" id="IPR002942">
    <property type="entry name" value="S4_RNA-bd"/>
</dbReference>
<dbReference type="InterPro" id="IPR036986">
    <property type="entry name" value="S4_RNA-bd_sf"/>
</dbReference>
<dbReference type="NCBIfam" id="NF003717">
    <property type="entry name" value="PRK05327.1"/>
    <property type="match status" value="1"/>
</dbReference>
<dbReference type="NCBIfam" id="TIGR01017">
    <property type="entry name" value="rpsD_bact"/>
    <property type="match status" value="1"/>
</dbReference>
<dbReference type="PANTHER" id="PTHR11831">
    <property type="entry name" value="30S 40S RIBOSOMAL PROTEIN"/>
    <property type="match status" value="1"/>
</dbReference>
<dbReference type="PANTHER" id="PTHR11831:SF4">
    <property type="entry name" value="SMALL RIBOSOMAL SUBUNIT PROTEIN US4M"/>
    <property type="match status" value="1"/>
</dbReference>
<dbReference type="Pfam" id="PF00163">
    <property type="entry name" value="Ribosomal_S4"/>
    <property type="match status" value="1"/>
</dbReference>
<dbReference type="Pfam" id="PF01479">
    <property type="entry name" value="S4"/>
    <property type="match status" value="1"/>
</dbReference>
<dbReference type="SMART" id="SM01390">
    <property type="entry name" value="Ribosomal_S4"/>
    <property type="match status" value="1"/>
</dbReference>
<dbReference type="SMART" id="SM00363">
    <property type="entry name" value="S4"/>
    <property type="match status" value="1"/>
</dbReference>
<dbReference type="SUPFAM" id="SSF55174">
    <property type="entry name" value="Alpha-L RNA-binding motif"/>
    <property type="match status" value="1"/>
</dbReference>
<dbReference type="PROSITE" id="PS00632">
    <property type="entry name" value="RIBOSOMAL_S4"/>
    <property type="match status" value="1"/>
</dbReference>
<dbReference type="PROSITE" id="PS50889">
    <property type="entry name" value="S4"/>
    <property type="match status" value="1"/>
</dbReference>
<gene>
    <name type="primary">rpsD3</name>
    <name type="ordered locus">CA_C1594</name>
</gene>
<comment type="function">
    <text evidence="1">One of the primary rRNA binding proteins, it binds directly to 16S rRNA where it nucleates assembly of the body of the 30S subunit.</text>
</comment>
<comment type="function">
    <text evidence="1">With S5 and S12 plays an important role in translational accuracy.</text>
</comment>
<comment type="subunit">
    <text evidence="1">Part of the 30S ribosomal subunit. Contacts protein S5. The interaction surface between S4 and S5 is involved in control of translational fidelity (By similarity).</text>
</comment>
<comment type="similarity">
    <text evidence="3">Belongs to the universal ribosomal protein uS4 family.</text>
</comment>
<feature type="chain" id="PRO_0000132369" description="Small ribosomal subunit protein uS4C">
    <location>
        <begin position="1"/>
        <end position="196"/>
    </location>
</feature>
<feature type="domain" description="S4 RNA-binding">
    <location>
        <begin position="87"/>
        <end position="149"/>
    </location>
</feature>
<evidence type="ECO:0000250" key="1"/>
<evidence type="ECO:0000255" key="2">
    <source>
        <dbReference type="HAMAP-Rule" id="MF_01306"/>
    </source>
</evidence>
<evidence type="ECO:0000305" key="3"/>